<keyword id="KW-0413">Isomerase</keyword>
<keyword id="KW-0460">Magnesium</keyword>
<keyword id="KW-0479">Metal-binding</keyword>
<keyword id="KW-0597">Phosphoprotein</keyword>
<keyword id="KW-1185">Reference proteome</keyword>
<reference key="1">
    <citation type="journal article" date="2002" name="Nature">
        <title>Genome sequence of the plant pathogen Ralstonia solanacearum.</title>
        <authorList>
            <person name="Salanoubat M."/>
            <person name="Genin S."/>
            <person name="Artiguenave F."/>
            <person name="Gouzy J."/>
            <person name="Mangenot S."/>
            <person name="Arlat M."/>
            <person name="Billault A."/>
            <person name="Brottier P."/>
            <person name="Camus J.-C."/>
            <person name="Cattolico L."/>
            <person name="Chandler M."/>
            <person name="Choisne N."/>
            <person name="Claudel-Renard C."/>
            <person name="Cunnac S."/>
            <person name="Demange N."/>
            <person name="Gaspin C."/>
            <person name="Lavie M."/>
            <person name="Moisan A."/>
            <person name="Robert C."/>
            <person name="Saurin W."/>
            <person name="Schiex T."/>
            <person name="Siguier P."/>
            <person name="Thebault P."/>
            <person name="Whalen M."/>
            <person name="Wincker P."/>
            <person name="Levy M."/>
            <person name="Weissenbach J."/>
            <person name="Boucher C.A."/>
        </authorList>
    </citation>
    <scope>NUCLEOTIDE SEQUENCE [LARGE SCALE GENOMIC DNA]</scope>
    <source>
        <strain>ATCC BAA-1114 / GMI1000</strain>
    </source>
</reference>
<dbReference type="EC" id="5.4.2.10" evidence="1"/>
<dbReference type="EMBL" id="AL646052">
    <property type="protein sequence ID" value="CAD15230.1"/>
    <property type="molecule type" value="Genomic_DNA"/>
</dbReference>
<dbReference type="RefSeq" id="WP_011001475.1">
    <property type="nucleotide sequence ID" value="NC_003295.1"/>
</dbReference>
<dbReference type="SMR" id="Q8XZ76"/>
<dbReference type="STRING" id="267608.RSc1528"/>
<dbReference type="EnsemblBacteria" id="CAD15230">
    <property type="protein sequence ID" value="CAD15230"/>
    <property type="gene ID" value="RSc1528"/>
</dbReference>
<dbReference type="KEGG" id="rso:RSc1528"/>
<dbReference type="eggNOG" id="COG1109">
    <property type="taxonomic scope" value="Bacteria"/>
</dbReference>
<dbReference type="HOGENOM" id="CLU_016950_7_0_4"/>
<dbReference type="Proteomes" id="UP000001436">
    <property type="component" value="Chromosome"/>
</dbReference>
<dbReference type="GO" id="GO:0005829">
    <property type="term" value="C:cytosol"/>
    <property type="evidence" value="ECO:0007669"/>
    <property type="project" value="TreeGrafter"/>
</dbReference>
<dbReference type="GO" id="GO:0000287">
    <property type="term" value="F:magnesium ion binding"/>
    <property type="evidence" value="ECO:0007669"/>
    <property type="project" value="UniProtKB-UniRule"/>
</dbReference>
<dbReference type="GO" id="GO:0008966">
    <property type="term" value="F:phosphoglucosamine mutase activity"/>
    <property type="evidence" value="ECO:0007669"/>
    <property type="project" value="UniProtKB-UniRule"/>
</dbReference>
<dbReference type="GO" id="GO:0004615">
    <property type="term" value="F:phosphomannomutase activity"/>
    <property type="evidence" value="ECO:0007669"/>
    <property type="project" value="TreeGrafter"/>
</dbReference>
<dbReference type="GO" id="GO:0005975">
    <property type="term" value="P:carbohydrate metabolic process"/>
    <property type="evidence" value="ECO:0007669"/>
    <property type="project" value="InterPro"/>
</dbReference>
<dbReference type="GO" id="GO:0009252">
    <property type="term" value="P:peptidoglycan biosynthetic process"/>
    <property type="evidence" value="ECO:0007669"/>
    <property type="project" value="TreeGrafter"/>
</dbReference>
<dbReference type="GO" id="GO:0006048">
    <property type="term" value="P:UDP-N-acetylglucosamine biosynthetic process"/>
    <property type="evidence" value="ECO:0007669"/>
    <property type="project" value="TreeGrafter"/>
</dbReference>
<dbReference type="CDD" id="cd05802">
    <property type="entry name" value="GlmM"/>
    <property type="match status" value="1"/>
</dbReference>
<dbReference type="FunFam" id="3.30.310.50:FF:000001">
    <property type="entry name" value="Phosphoglucosamine mutase"/>
    <property type="match status" value="1"/>
</dbReference>
<dbReference type="FunFam" id="3.40.120.10:FF:000001">
    <property type="entry name" value="Phosphoglucosamine mutase"/>
    <property type="match status" value="1"/>
</dbReference>
<dbReference type="FunFam" id="3.40.120.10:FF:000003">
    <property type="entry name" value="Phosphoglucosamine mutase"/>
    <property type="match status" value="1"/>
</dbReference>
<dbReference type="Gene3D" id="3.40.120.10">
    <property type="entry name" value="Alpha-D-Glucose-1,6-Bisphosphate, subunit A, domain 3"/>
    <property type="match status" value="3"/>
</dbReference>
<dbReference type="Gene3D" id="3.30.310.50">
    <property type="entry name" value="Alpha-D-phosphohexomutase, C-terminal domain"/>
    <property type="match status" value="1"/>
</dbReference>
<dbReference type="HAMAP" id="MF_01554_B">
    <property type="entry name" value="GlmM_B"/>
    <property type="match status" value="1"/>
</dbReference>
<dbReference type="InterPro" id="IPR005844">
    <property type="entry name" value="A-D-PHexomutase_a/b/a-I"/>
</dbReference>
<dbReference type="InterPro" id="IPR016055">
    <property type="entry name" value="A-D-PHexomutase_a/b/a-I/II/III"/>
</dbReference>
<dbReference type="InterPro" id="IPR005845">
    <property type="entry name" value="A-D-PHexomutase_a/b/a-II"/>
</dbReference>
<dbReference type="InterPro" id="IPR005846">
    <property type="entry name" value="A-D-PHexomutase_a/b/a-III"/>
</dbReference>
<dbReference type="InterPro" id="IPR005843">
    <property type="entry name" value="A-D-PHexomutase_C"/>
</dbReference>
<dbReference type="InterPro" id="IPR036900">
    <property type="entry name" value="A-D-PHexomutase_C_sf"/>
</dbReference>
<dbReference type="InterPro" id="IPR016066">
    <property type="entry name" value="A-D-PHexomutase_CS"/>
</dbReference>
<dbReference type="InterPro" id="IPR005841">
    <property type="entry name" value="Alpha-D-phosphohexomutase_SF"/>
</dbReference>
<dbReference type="InterPro" id="IPR006352">
    <property type="entry name" value="GlmM_bact"/>
</dbReference>
<dbReference type="InterPro" id="IPR050060">
    <property type="entry name" value="Phosphoglucosamine_mutase"/>
</dbReference>
<dbReference type="NCBIfam" id="TIGR01455">
    <property type="entry name" value="glmM"/>
    <property type="match status" value="1"/>
</dbReference>
<dbReference type="NCBIfam" id="NF008139">
    <property type="entry name" value="PRK10887.1"/>
    <property type="match status" value="1"/>
</dbReference>
<dbReference type="PANTHER" id="PTHR42946:SF1">
    <property type="entry name" value="PHOSPHOGLUCOMUTASE (ALPHA-D-GLUCOSE-1,6-BISPHOSPHATE-DEPENDENT)"/>
    <property type="match status" value="1"/>
</dbReference>
<dbReference type="PANTHER" id="PTHR42946">
    <property type="entry name" value="PHOSPHOHEXOSE MUTASE"/>
    <property type="match status" value="1"/>
</dbReference>
<dbReference type="Pfam" id="PF02878">
    <property type="entry name" value="PGM_PMM_I"/>
    <property type="match status" value="1"/>
</dbReference>
<dbReference type="Pfam" id="PF02879">
    <property type="entry name" value="PGM_PMM_II"/>
    <property type="match status" value="1"/>
</dbReference>
<dbReference type="Pfam" id="PF02880">
    <property type="entry name" value="PGM_PMM_III"/>
    <property type="match status" value="1"/>
</dbReference>
<dbReference type="Pfam" id="PF00408">
    <property type="entry name" value="PGM_PMM_IV"/>
    <property type="match status" value="1"/>
</dbReference>
<dbReference type="PRINTS" id="PR00509">
    <property type="entry name" value="PGMPMM"/>
</dbReference>
<dbReference type="SUPFAM" id="SSF55957">
    <property type="entry name" value="Phosphoglucomutase, C-terminal domain"/>
    <property type="match status" value="1"/>
</dbReference>
<dbReference type="SUPFAM" id="SSF53738">
    <property type="entry name" value="Phosphoglucomutase, first 3 domains"/>
    <property type="match status" value="3"/>
</dbReference>
<dbReference type="PROSITE" id="PS00710">
    <property type="entry name" value="PGM_PMM"/>
    <property type="match status" value="1"/>
</dbReference>
<name>GLMM_RALN1</name>
<gene>
    <name evidence="1" type="primary">glmM</name>
    <name type="ordered locus">RSc1528</name>
    <name type="ORF">RS03776</name>
</gene>
<protein>
    <recommendedName>
        <fullName evidence="1">Phosphoglucosamine mutase</fullName>
        <ecNumber evidence="1">5.4.2.10</ecNumber>
    </recommendedName>
</protein>
<organism>
    <name type="scientific">Ralstonia nicotianae (strain ATCC BAA-1114 / GMI1000)</name>
    <name type="common">Ralstonia solanacearum</name>
    <dbReference type="NCBI Taxonomy" id="267608"/>
    <lineage>
        <taxon>Bacteria</taxon>
        <taxon>Pseudomonadati</taxon>
        <taxon>Pseudomonadota</taxon>
        <taxon>Betaproteobacteria</taxon>
        <taxon>Burkholderiales</taxon>
        <taxon>Burkholderiaceae</taxon>
        <taxon>Ralstonia</taxon>
        <taxon>Ralstonia solanacearum species complex</taxon>
    </lineage>
</organism>
<evidence type="ECO:0000255" key="1">
    <source>
        <dbReference type="HAMAP-Rule" id="MF_01554"/>
    </source>
</evidence>
<proteinExistence type="inferred from homology"/>
<sequence>MSRKYFGTDGIRGRVGESPITPDFVLRLGYAAGRVLAHGSEAHGHGRPTVLIGKDTRLSGYMLEAALEAGFTAAGVDVLMSGPLPTPGVAYLTRALRLSAGVVISASHNPYYDNGIKFFSATGDKLPDETESQIEAELEKPMVYAASDALGRARRIDDAAGRYIEFCKSTFPNDLNLFGMKIVLDSAHGAAYHIAPHVFHELGAEVVSIGNQPNGRNINDGYGATEPAKLIEATRQHGADLGLAFDGDADRLQVVDRNGRLYNGDELLYVMVQARRAAGQAVPGAVGTLMTNLAVELALKAQGVEFVRAKVGDRYVLEELKKHGWLLGGEGSGHLLCLDKHSTGDGIISALQVLAALRRSGQTLEQVLDGVHLFPQKLINVRVEKGFDWKAHAALQAALKVSEAELNGKGRVLIRPSGTEPVVRVMVEAQDAALATKYAEQLAATLQ</sequence>
<feature type="chain" id="PRO_0000147946" description="Phosphoglucosamine mutase">
    <location>
        <begin position="1"/>
        <end position="447"/>
    </location>
</feature>
<feature type="active site" description="Phosphoserine intermediate" evidence="1">
    <location>
        <position position="107"/>
    </location>
</feature>
<feature type="binding site" description="via phosphate group" evidence="1">
    <location>
        <position position="107"/>
    </location>
    <ligand>
        <name>Mg(2+)</name>
        <dbReference type="ChEBI" id="CHEBI:18420"/>
    </ligand>
</feature>
<feature type="binding site" evidence="1">
    <location>
        <position position="246"/>
    </location>
    <ligand>
        <name>Mg(2+)</name>
        <dbReference type="ChEBI" id="CHEBI:18420"/>
    </ligand>
</feature>
<feature type="binding site" evidence="1">
    <location>
        <position position="248"/>
    </location>
    <ligand>
        <name>Mg(2+)</name>
        <dbReference type="ChEBI" id="CHEBI:18420"/>
    </ligand>
</feature>
<feature type="binding site" evidence="1">
    <location>
        <position position="250"/>
    </location>
    <ligand>
        <name>Mg(2+)</name>
        <dbReference type="ChEBI" id="CHEBI:18420"/>
    </ligand>
</feature>
<feature type="modified residue" description="Phosphoserine" evidence="1">
    <location>
        <position position="107"/>
    </location>
</feature>
<accession>Q8XZ76</accession>
<comment type="function">
    <text evidence="1">Catalyzes the conversion of glucosamine-6-phosphate to glucosamine-1-phosphate.</text>
</comment>
<comment type="catalytic activity">
    <reaction evidence="1">
        <text>alpha-D-glucosamine 1-phosphate = D-glucosamine 6-phosphate</text>
        <dbReference type="Rhea" id="RHEA:23424"/>
        <dbReference type="ChEBI" id="CHEBI:58516"/>
        <dbReference type="ChEBI" id="CHEBI:58725"/>
        <dbReference type="EC" id="5.4.2.10"/>
    </reaction>
</comment>
<comment type="cofactor">
    <cofactor evidence="1">
        <name>Mg(2+)</name>
        <dbReference type="ChEBI" id="CHEBI:18420"/>
    </cofactor>
    <text evidence="1">Binds 1 Mg(2+) ion per subunit.</text>
</comment>
<comment type="PTM">
    <text evidence="1">Activated by phosphorylation.</text>
</comment>
<comment type="similarity">
    <text evidence="1">Belongs to the phosphohexose mutase family.</text>
</comment>